<accession>B1W470</accession>
<gene>
    <name evidence="1" type="primary">metK</name>
    <name type="ordered locus">SGR_6058</name>
</gene>
<name>METK_STRGG</name>
<proteinExistence type="inferred from homology"/>
<sequence>MSRRLFTSESVTEGHPDKIADQISDTILDALLREDPTSRVAVETLITTGLVHVAGEVTTKAYADIPNLVRNKVLEIGYDSSKKGFDGASCGVSVSIGAQSPDIAQGVDTAYEKRVEGDEDELDKQGAGDQGLMFGYACDETPELMPLPIHVAHRLSRRLSEVRKNGTIPYLRPDGKTQVTIEYDGDKAVRLDTVVVSSQHASDIDLDSLLAPDIREFVVEHVLAQLVEDGIKLDTEGYRLLVNPTGRFEIGGPMGDAGLTGRKIIIDTYGGMARHGGGAFSGKDPSKVDRSAAYAMRWVAKNVVAAGLAARCEVQVAYAIGKAEPVGLFVETFGTAAVDTEKIENAIGEVFDLRPAAIIRDLDLLRPIYAQTAAYGHFGRELPDFTWERTDRVDALRAAAGL</sequence>
<evidence type="ECO:0000255" key="1">
    <source>
        <dbReference type="HAMAP-Rule" id="MF_00086"/>
    </source>
</evidence>
<feature type="chain" id="PRO_1000093088" description="S-adenosylmethionine synthase">
    <location>
        <begin position="1"/>
        <end position="402"/>
    </location>
</feature>
<feature type="region of interest" description="Flexible loop" evidence="1">
    <location>
        <begin position="99"/>
        <end position="109"/>
    </location>
</feature>
<feature type="binding site" description="in other chain" evidence="1">
    <location>
        <position position="15"/>
    </location>
    <ligand>
        <name>ATP</name>
        <dbReference type="ChEBI" id="CHEBI:30616"/>
        <note>ligand shared between two neighboring subunits</note>
    </ligand>
</feature>
<feature type="binding site" evidence="1">
    <location>
        <position position="17"/>
    </location>
    <ligand>
        <name>Mg(2+)</name>
        <dbReference type="ChEBI" id="CHEBI:18420"/>
    </ligand>
</feature>
<feature type="binding site" evidence="1">
    <location>
        <position position="43"/>
    </location>
    <ligand>
        <name>K(+)</name>
        <dbReference type="ChEBI" id="CHEBI:29103"/>
    </ligand>
</feature>
<feature type="binding site" description="in other chain" evidence="1">
    <location>
        <position position="56"/>
    </location>
    <ligand>
        <name>L-methionine</name>
        <dbReference type="ChEBI" id="CHEBI:57844"/>
        <note>ligand shared between two neighboring subunits</note>
    </ligand>
</feature>
<feature type="binding site" description="in other chain" evidence="1">
    <location>
        <position position="99"/>
    </location>
    <ligand>
        <name>L-methionine</name>
        <dbReference type="ChEBI" id="CHEBI:57844"/>
        <note>ligand shared between two neighboring subunits</note>
    </ligand>
</feature>
<feature type="binding site" description="in other chain" evidence="1">
    <location>
        <begin position="174"/>
        <end position="176"/>
    </location>
    <ligand>
        <name>ATP</name>
        <dbReference type="ChEBI" id="CHEBI:30616"/>
        <note>ligand shared between two neighboring subunits</note>
    </ligand>
</feature>
<feature type="binding site" description="in other chain" evidence="1">
    <location>
        <begin position="247"/>
        <end position="248"/>
    </location>
    <ligand>
        <name>ATP</name>
        <dbReference type="ChEBI" id="CHEBI:30616"/>
        <note>ligand shared between two neighboring subunits</note>
    </ligand>
</feature>
<feature type="binding site" evidence="1">
    <location>
        <position position="256"/>
    </location>
    <ligand>
        <name>ATP</name>
        <dbReference type="ChEBI" id="CHEBI:30616"/>
        <note>ligand shared between two neighboring subunits</note>
    </ligand>
</feature>
<feature type="binding site" evidence="1">
    <location>
        <position position="256"/>
    </location>
    <ligand>
        <name>L-methionine</name>
        <dbReference type="ChEBI" id="CHEBI:57844"/>
        <note>ligand shared between two neighboring subunits</note>
    </ligand>
</feature>
<feature type="binding site" description="in other chain" evidence="1">
    <location>
        <begin position="262"/>
        <end position="263"/>
    </location>
    <ligand>
        <name>ATP</name>
        <dbReference type="ChEBI" id="CHEBI:30616"/>
        <note>ligand shared between two neighboring subunits</note>
    </ligand>
</feature>
<feature type="binding site" evidence="1">
    <location>
        <position position="279"/>
    </location>
    <ligand>
        <name>ATP</name>
        <dbReference type="ChEBI" id="CHEBI:30616"/>
        <note>ligand shared between two neighboring subunits</note>
    </ligand>
</feature>
<feature type="binding site" evidence="1">
    <location>
        <position position="283"/>
    </location>
    <ligand>
        <name>ATP</name>
        <dbReference type="ChEBI" id="CHEBI:30616"/>
        <note>ligand shared between two neighboring subunits</note>
    </ligand>
</feature>
<feature type="binding site" description="in other chain" evidence="1">
    <location>
        <position position="287"/>
    </location>
    <ligand>
        <name>L-methionine</name>
        <dbReference type="ChEBI" id="CHEBI:57844"/>
        <note>ligand shared between two neighboring subunits</note>
    </ligand>
</feature>
<protein>
    <recommendedName>
        <fullName evidence="1">S-adenosylmethionine synthase</fullName>
        <shortName evidence="1">AdoMet synthase</shortName>
        <ecNumber evidence="1">2.5.1.6</ecNumber>
    </recommendedName>
    <alternativeName>
        <fullName evidence="1">MAT</fullName>
    </alternativeName>
    <alternativeName>
        <fullName evidence="1">Methionine adenosyltransferase</fullName>
    </alternativeName>
</protein>
<reference key="1">
    <citation type="journal article" date="2008" name="J. Bacteriol.">
        <title>Genome sequence of the streptomycin-producing microorganism Streptomyces griseus IFO 13350.</title>
        <authorList>
            <person name="Ohnishi Y."/>
            <person name="Ishikawa J."/>
            <person name="Hara H."/>
            <person name="Suzuki H."/>
            <person name="Ikenoya M."/>
            <person name="Ikeda H."/>
            <person name="Yamashita A."/>
            <person name="Hattori M."/>
            <person name="Horinouchi S."/>
        </authorList>
    </citation>
    <scope>NUCLEOTIDE SEQUENCE [LARGE SCALE GENOMIC DNA]</scope>
    <source>
        <strain>JCM 4626 / CBS 651.72 / NBRC 13350 / KCC S-0626 / ISP 5235</strain>
    </source>
</reference>
<keyword id="KW-0067">ATP-binding</keyword>
<keyword id="KW-0963">Cytoplasm</keyword>
<keyword id="KW-0460">Magnesium</keyword>
<keyword id="KW-0479">Metal-binding</keyword>
<keyword id="KW-0547">Nucleotide-binding</keyword>
<keyword id="KW-0554">One-carbon metabolism</keyword>
<keyword id="KW-0630">Potassium</keyword>
<keyword id="KW-0808">Transferase</keyword>
<dbReference type="EC" id="2.5.1.6" evidence="1"/>
<dbReference type="EMBL" id="AP009493">
    <property type="protein sequence ID" value="BAG22887.1"/>
    <property type="molecule type" value="Genomic_DNA"/>
</dbReference>
<dbReference type="RefSeq" id="WP_003970371.1">
    <property type="nucleotide sequence ID" value="NC_010572.1"/>
</dbReference>
<dbReference type="SMR" id="B1W470"/>
<dbReference type="KEGG" id="sgr:SGR_6058"/>
<dbReference type="eggNOG" id="COG0192">
    <property type="taxonomic scope" value="Bacteria"/>
</dbReference>
<dbReference type="HOGENOM" id="CLU_041802_1_1_11"/>
<dbReference type="UniPathway" id="UPA00315">
    <property type="reaction ID" value="UER00080"/>
</dbReference>
<dbReference type="Proteomes" id="UP000001685">
    <property type="component" value="Chromosome"/>
</dbReference>
<dbReference type="GO" id="GO:0005737">
    <property type="term" value="C:cytoplasm"/>
    <property type="evidence" value="ECO:0007669"/>
    <property type="project" value="UniProtKB-SubCell"/>
</dbReference>
<dbReference type="GO" id="GO:0005524">
    <property type="term" value="F:ATP binding"/>
    <property type="evidence" value="ECO:0007669"/>
    <property type="project" value="UniProtKB-UniRule"/>
</dbReference>
<dbReference type="GO" id="GO:0000287">
    <property type="term" value="F:magnesium ion binding"/>
    <property type="evidence" value="ECO:0007669"/>
    <property type="project" value="UniProtKB-UniRule"/>
</dbReference>
<dbReference type="GO" id="GO:0004478">
    <property type="term" value="F:methionine adenosyltransferase activity"/>
    <property type="evidence" value="ECO:0007669"/>
    <property type="project" value="UniProtKB-UniRule"/>
</dbReference>
<dbReference type="GO" id="GO:0006730">
    <property type="term" value="P:one-carbon metabolic process"/>
    <property type="evidence" value="ECO:0007669"/>
    <property type="project" value="UniProtKB-KW"/>
</dbReference>
<dbReference type="GO" id="GO:0006556">
    <property type="term" value="P:S-adenosylmethionine biosynthetic process"/>
    <property type="evidence" value="ECO:0007669"/>
    <property type="project" value="UniProtKB-UniRule"/>
</dbReference>
<dbReference type="CDD" id="cd18079">
    <property type="entry name" value="S-AdoMet_synt"/>
    <property type="match status" value="1"/>
</dbReference>
<dbReference type="FunFam" id="3.30.300.10:FF:000006">
    <property type="entry name" value="S-adenosylmethionine synthase"/>
    <property type="match status" value="1"/>
</dbReference>
<dbReference type="Gene3D" id="3.30.300.10">
    <property type="match status" value="3"/>
</dbReference>
<dbReference type="HAMAP" id="MF_00086">
    <property type="entry name" value="S_AdoMet_synth1"/>
    <property type="match status" value="1"/>
</dbReference>
<dbReference type="InterPro" id="IPR022631">
    <property type="entry name" value="ADOMET_SYNTHASE_CS"/>
</dbReference>
<dbReference type="InterPro" id="IPR022630">
    <property type="entry name" value="S-AdoMet_synt_C"/>
</dbReference>
<dbReference type="InterPro" id="IPR022629">
    <property type="entry name" value="S-AdoMet_synt_central"/>
</dbReference>
<dbReference type="InterPro" id="IPR022628">
    <property type="entry name" value="S-AdoMet_synt_N"/>
</dbReference>
<dbReference type="InterPro" id="IPR002133">
    <property type="entry name" value="S-AdoMet_synthetase"/>
</dbReference>
<dbReference type="InterPro" id="IPR022636">
    <property type="entry name" value="S-AdoMet_synthetase_sfam"/>
</dbReference>
<dbReference type="NCBIfam" id="TIGR01034">
    <property type="entry name" value="metK"/>
    <property type="match status" value="1"/>
</dbReference>
<dbReference type="PANTHER" id="PTHR11964">
    <property type="entry name" value="S-ADENOSYLMETHIONINE SYNTHETASE"/>
    <property type="match status" value="1"/>
</dbReference>
<dbReference type="Pfam" id="PF02773">
    <property type="entry name" value="S-AdoMet_synt_C"/>
    <property type="match status" value="1"/>
</dbReference>
<dbReference type="Pfam" id="PF02772">
    <property type="entry name" value="S-AdoMet_synt_M"/>
    <property type="match status" value="1"/>
</dbReference>
<dbReference type="Pfam" id="PF00438">
    <property type="entry name" value="S-AdoMet_synt_N"/>
    <property type="match status" value="1"/>
</dbReference>
<dbReference type="PIRSF" id="PIRSF000497">
    <property type="entry name" value="MAT"/>
    <property type="match status" value="1"/>
</dbReference>
<dbReference type="SUPFAM" id="SSF55973">
    <property type="entry name" value="S-adenosylmethionine synthetase"/>
    <property type="match status" value="3"/>
</dbReference>
<dbReference type="PROSITE" id="PS00376">
    <property type="entry name" value="ADOMET_SYNTHASE_1"/>
    <property type="match status" value="1"/>
</dbReference>
<dbReference type="PROSITE" id="PS00377">
    <property type="entry name" value="ADOMET_SYNTHASE_2"/>
    <property type="match status" value="1"/>
</dbReference>
<comment type="function">
    <text evidence="1">Catalyzes the formation of S-adenosylmethionine (AdoMet) from methionine and ATP. The overall synthetic reaction is composed of two sequential steps, AdoMet formation and the subsequent tripolyphosphate hydrolysis which occurs prior to release of AdoMet from the enzyme.</text>
</comment>
<comment type="catalytic activity">
    <reaction evidence="1">
        <text>L-methionine + ATP + H2O = S-adenosyl-L-methionine + phosphate + diphosphate</text>
        <dbReference type="Rhea" id="RHEA:21080"/>
        <dbReference type="ChEBI" id="CHEBI:15377"/>
        <dbReference type="ChEBI" id="CHEBI:30616"/>
        <dbReference type="ChEBI" id="CHEBI:33019"/>
        <dbReference type="ChEBI" id="CHEBI:43474"/>
        <dbReference type="ChEBI" id="CHEBI:57844"/>
        <dbReference type="ChEBI" id="CHEBI:59789"/>
        <dbReference type="EC" id="2.5.1.6"/>
    </reaction>
</comment>
<comment type="cofactor">
    <cofactor evidence="1">
        <name>Mg(2+)</name>
        <dbReference type="ChEBI" id="CHEBI:18420"/>
    </cofactor>
    <text evidence="1">Binds 2 divalent ions per subunit.</text>
</comment>
<comment type="cofactor">
    <cofactor evidence="1">
        <name>K(+)</name>
        <dbReference type="ChEBI" id="CHEBI:29103"/>
    </cofactor>
    <text evidence="1">Binds 1 potassium ion per subunit.</text>
</comment>
<comment type="pathway">
    <text evidence="1">Amino-acid biosynthesis; S-adenosyl-L-methionine biosynthesis; S-adenosyl-L-methionine from L-methionine: step 1/1.</text>
</comment>
<comment type="subunit">
    <text evidence="1">Homotetramer; dimer of dimers.</text>
</comment>
<comment type="subcellular location">
    <subcellularLocation>
        <location evidence="1">Cytoplasm</location>
    </subcellularLocation>
</comment>
<comment type="similarity">
    <text evidence="1">Belongs to the AdoMet synthase family.</text>
</comment>
<organism>
    <name type="scientific">Streptomyces griseus subsp. griseus (strain JCM 4626 / CBS 651.72 / NBRC 13350 / KCC S-0626 / ISP 5235)</name>
    <dbReference type="NCBI Taxonomy" id="455632"/>
    <lineage>
        <taxon>Bacteria</taxon>
        <taxon>Bacillati</taxon>
        <taxon>Actinomycetota</taxon>
        <taxon>Actinomycetes</taxon>
        <taxon>Kitasatosporales</taxon>
        <taxon>Streptomycetaceae</taxon>
        <taxon>Streptomyces</taxon>
    </lineage>
</organism>